<comment type="function">
    <text evidence="1">Mitochondrial invertase that cleaves sucrose into glucose and fructose.</text>
</comment>
<comment type="catalytic activity">
    <reaction evidence="1">
        <text>Hydrolysis of terminal non-reducing beta-D-fructofuranoside residues in beta-D-fructofuranosides.</text>
        <dbReference type="EC" id="3.2.1.26"/>
    </reaction>
</comment>
<comment type="subcellular location">
    <subcellularLocation>
        <location evidence="4">Plastid</location>
        <location evidence="4">Chloroplast</location>
    </subcellularLocation>
</comment>
<comment type="similarity">
    <text evidence="6">Belongs to the glycosyl hydrolase 100 family.</text>
</comment>
<protein>
    <recommendedName>
        <fullName evidence="6">Neutral/alkaline invertase 3, chloroplastic</fullName>
        <shortName evidence="5">OsNIN3</shortName>
        <ecNumber evidence="1">3.2.1.26</ecNumber>
    </recommendedName>
</protein>
<accession>Q6H6N5</accession>
<accession>A0A0N7KFE8</accession>
<gene>
    <name evidence="5" type="primary">NIN3</name>
    <name evidence="9" type="ordered locus">Os02g0529400</name>
    <name evidence="6" type="ordered locus">LOC_Os02g32730</name>
    <name evidence="10" type="ORF">OsJ_06987</name>
    <name evidence="8" type="ORF">P0475F05.37-1</name>
    <name evidence="7" type="ORF">P0476H10.21-1</name>
</gene>
<dbReference type="EC" id="3.2.1.26" evidence="1"/>
<dbReference type="EMBL" id="AP004790">
    <property type="protein sequence ID" value="BAD25431.1"/>
    <property type="molecule type" value="Genomic_DNA"/>
</dbReference>
<dbReference type="EMBL" id="AP004879">
    <property type="protein sequence ID" value="BAD25614.1"/>
    <property type="molecule type" value="Genomic_DNA"/>
</dbReference>
<dbReference type="EMBL" id="AP008208">
    <property type="protein sequence ID" value="BAF08926.1"/>
    <property type="molecule type" value="Genomic_DNA"/>
</dbReference>
<dbReference type="EMBL" id="AP014958">
    <property type="protein sequence ID" value="BAS79017.1"/>
    <property type="molecule type" value="Genomic_DNA"/>
</dbReference>
<dbReference type="EMBL" id="CM000139">
    <property type="protein sequence ID" value="EAZ23290.1"/>
    <property type="molecule type" value="Genomic_DNA"/>
</dbReference>
<dbReference type="EMBL" id="AK121301">
    <property type="protein sequence ID" value="BAH00419.1"/>
    <property type="molecule type" value="mRNA"/>
</dbReference>
<dbReference type="RefSeq" id="XP_015627031.1">
    <property type="nucleotide sequence ID" value="XM_015771545.1"/>
</dbReference>
<dbReference type="SMR" id="Q6H6N5"/>
<dbReference type="FunCoup" id="Q6H6N5">
    <property type="interactions" value="1073"/>
</dbReference>
<dbReference type="STRING" id="39947.Q6H6N5"/>
<dbReference type="CAZy" id="GH100">
    <property type="family name" value="Glycoside Hydrolase Family 100"/>
</dbReference>
<dbReference type="PaxDb" id="39947-Q6H6N5"/>
<dbReference type="EnsemblPlants" id="Os02t0529400-01">
    <property type="protein sequence ID" value="Os02t0529400-01"/>
    <property type="gene ID" value="Os02g0529400"/>
</dbReference>
<dbReference type="Gramene" id="Os02t0529400-01">
    <property type="protein sequence ID" value="Os02t0529400-01"/>
    <property type="gene ID" value="Os02g0529400"/>
</dbReference>
<dbReference type="KEGG" id="dosa:Os02g0529400"/>
<dbReference type="eggNOG" id="ENOG502QPZ2">
    <property type="taxonomic scope" value="Eukaryota"/>
</dbReference>
<dbReference type="HOGENOM" id="CLU_020846_1_0_1"/>
<dbReference type="InParanoid" id="Q6H6N5"/>
<dbReference type="OMA" id="GQEWKII"/>
<dbReference type="OrthoDB" id="2014030at2759"/>
<dbReference type="Proteomes" id="UP000000763">
    <property type="component" value="Chromosome 2"/>
</dbReference>
<dbReference type="Proteomes" id="UP000007752">
    <property type="component" value="Chromosome 2"/>
</dbReference>
<dbReference type="Proteomes" id="UP000059680">
    <property type="component" value="Chromosome 2"/>
</dbReference>
<dbReference type="ExpressionAtlas" id="Q6H6N5">
    <property type="expression patterns" value="baseline and differential"/>
</dbReference>
<dbReference type="GO" id="GO:0009507">
    <property type="term" value="C:chloroplast"/>
    <property type="evidence" value="ECO:0000314"/>
    <property type="project" value="UniProtKB"/>
</dbReference>
<dbReference type="GO" id="GO:0033926">
    <property type="term" value="F:endo-alpha-N-acetylgalactosaminidase activity"/>
    <property type="evidence" value="ECO:0007669"/>
    <property type="project" value="InterPro"/>
</dbReference>
<dbReference type="GO" id="GO:0004575">
    <property type="term" value="F:sucrose alpha-glucosidase activity"/>
    <property type="evidence" value="ECO:0000318"/>
    <property type="project" value="GO_Central"/>
</dbReference>
<dbReference type="GO" id="GO:0005987">
    <property type="term" value="P:sucrose catabolic process"/>
    <property type="evidence" value="ECO:0000318"/>
    <property type="project" value="GO_Central"/>
</dbReference>
<dbReference type="FunFam" id="1.50.10.10:FF:000001">
    <property type="entry name" value="probable alkaline/neutral invertase B"/>
    <property type="match status" value="1"/>
</dbReference>
<dbReference type="Gene3D" id="1.50.10.10">
    <property type="match status" value="1"/>
</dbReference>
<dbReference type="InterPro" id="IPR008928">
    <property type="entry name" value="6-hairpin_glycosidase_sf"/>
</dbReference>
<dbReference type="InterPro" id="IPR012341">
    <property type="entry name" value="6hp_glycosidase-like_sf"/>
</dbReference>
<dbReference type="InterPro" id="IPR024746">
    <property type="entry name" value="Glyco_hydro_100"/>
</dbReference>
<dbReference type="PANTHER" id="PTHR31916">
    <property type="match status" value="1"/>
</dbReference>
<dbReference type="PANTHER" id="PTHR31916:SF28">
    <property type="entry name" value="NEUTRAL_ALKALINE INVERTASE 3, CHLOROPLASTIC"/>
    <property type="match status" value="1"/>
</dbReference>
<dbReference type="Pfam" id="PF12899">
    <property type="entry name" value="Glyco_hydro_100"/>
    <property type="match status" value="1"/>
</dbReference>
<dbReference type="SUPFAM" id="SSF48208">
    <property type="entry name" value="Six-hairpin glycosidases"/>
    <property type="match status" value="1"/>
</dbReference>
<evidence type="ECO:0000250" key="1">
    <source>
        <dbReference type="UniProtKB" id="Q10MC0"/>
    </source>
</evidence>
<evidence type="ECO:0000255" key="2"/>
<evidence type="ECO:0000256" key="3">
    <source>
        <dbReference type="SAM" id="MobiDB-lite"/>
    </source>
</evidence>
<evidence type="ECO:0000269" key="4">
    <source>
    </source>
</evidence>
<evidence type="ECO:0000303" key="5">
    <source>
    </source>
</evidence>
<evidence type="ECO:0000305" key="6"/>
<evidence type="ECO:0000312" key="7">
    <source>
        <dbReference type="EMBL" id="BAD25431.1"/>
    </source>
</evidence>
<evidence type="ECO:0000312" key="8">
    <source>
        <dbReference type="EMBL" id="BAD25614.1"/>
    </source>
</evidence>
<evidence type="ECO:0000312" key="9">
    <source>
        <dbReference type="EMBL" id="BAF08926.1"/>
    </source>
</evidence>
<evidence type="ECO:0000312" key="10">
    <source>
        <dbReference type="EMBL" id="EAZ23290.1"/>
    </source>
</evidence>
<keyword id="KW-0119">Carbohydrate metabolism</keyword>
<keyword id="KW-0150">Chloroplast</keyword>
<keyword id="KW-0326">Glycosidase</keyword>
<keyword id="KW-0378">Hydrolase</keyword>
<keyword id="KW-0934">Plastid</keyword>
<keyword id="KW-1185">Reference proteome</keyword>
<keyword id="KW-0809">Transit peptide</keyword>
<sequence length="606" mass="67683">MGIAEVALHSMPGAFAAHSPASNLPLAADAARGRRRRSANSLHSSRALQGPVRFPGLRAAVECQCQRIDDLARVTEGNGAWVKDAVDKASHALGDVRVPGQAVGGNGSVNGSAAKPPPQRRKASSVEDEAWELLRESVVYYCGSPVGTIAANDPNDANPMNYDQVFIRDFIPSGIAFLLKGEYEIVRNFILHTLQLQSWEKTMDCHSPGQGLMPASFKVRTIPLDGDEDATEEVLDPDFGEAAIGRVAPVDSGLWWIILLRAYGKCSGDLTVQERIDVQTGIKMILKLCLADGFDMFPTLLVTDGSCMIDRRMGIHGHPLEIQALFYSALLCAREMLTPEDGSADLIRALNNRLIALSFHIREYYWVDMQKLNEIYRYKTEEYSYDAVNKFNIYPDQVSPWLVEWIPPKGGYFIGNLQPAHMDFRFFSLGNLWSIVSSLATTHQSHAILDLIESKWSDLVAEMPLKICYPALENQEWKIITGSDPKNTPWSYHNGGSWPTLLWQLTVASIKMNRPEIAAKAVEVAERRIAIDKWPEYYDTKRARFIGKQSRLYQTWSIAGYLVAKQLLDKPDAARILSNDEDSEILNALSTNRKRGKKVLKKTFIV</sequence>
<proteinExistence type="evidence at transcript level"/>
<organism>
    <name type="scientific">Oryza sativa subsp. japonica</name>
    <name type="common">Rice</name>
    <dbReference type="NCBI Taxonomy" id="39947"/>
    <lineage>
        <taxon>Eukaryota</taxon>
        <taxon>Viridiplantae</taxon>
        <taxon>Streptophyta</taxon>
        <taxon>Embryophyta</taxon>
        <taxon>Tracheophyta</taxon>
        <taxon>Spermatophyta</taxon>
        <taxon>Magnoliopsida</taxon>
        <taxon>Liliopsida</taxon>
        <taxon>Poales</taxon>
        <taxon>Poaceae</taxon>
        <taxon>BOP clade</taxon>
        <taxon>Oryzoideae</taxon>
        <taxon>Oryzeae</taxon>
        <taxon>Oryzinae</taxon>
        <taxon>Oryza</taxon>
        <taxon>Oryza sativa</taxon>
    </lineage>
</organism>
<reference key="1">
    <citation type="journal article" date="2005" name="Nature">
        <title>The map-based sequence of the rice genome.</title>
        <authorList>
            <consortium name="International rice genome sequencing project (IRGSP)"/>
        </authorList>
    </citation>
    <scope>NUCLEOTIDE SEQUENCE [LARGE SCALE GENOMIC DNA]</scope>
    <source>
        <strain>cv. Nipponbare</strain>
    </source>
</reference>
<reference key="2">
    <citation type="journal article" date="2008" name="Nucleic Acids Res.">
        <title>The rice annotation project database (RAP-DB): 2008 update.</title>
        <authorList>
            <consortium name="The rice annotation project (RAP)"/>
        </authorList>
    </citation>
    <scope>GENOME REANNOTATION</scope>
    <source>
        <strain>cv. Nipponbare</strain>
    </source>
</reference>
<reference key="3">
    <citation type="journal article" date="2013" name="Rice">
        <title>Improvement of the Oryza sativa Nipponbare reference genome using next generation sequence and optical map data.</title>
        <authorList>
            <person name="Kawahara Y."/>
            <person name="de la Bastide M."/>
            <person name="Hamilton J.P."/>
            <person name="Kanamori H."/>
            <person name="McCombie W.R."/>
            <person name="Ouyang S."/>
            <person name="Schwartz D.C."/>
            <person name="Tanaka T."/>
            <person name="Wu J."/>
            <person name="Zhou S."/>
            <person name="Childs K.L."/>
            <person name="Davidson R.M."/>
            <person name="Lin H."/>
            <person name="Quesada-Ocampo L."/>
            <person name="Vaillancourt B."/>
            <person name="Sakai H."/>
            <person name="Lee S.S."/>
            <person name="Kim J."/>
            <person name="Numa H."/>
            <person name="Itoh T."/>
            <person name="Buell C.R."/>
            <person name="Matsumoto T."/>
        </authorList>
    </citation>
    <scope>GENOME REANNOTATION</scope>
    <source>
        <strain>cv. Nipponbare</strain>
    </source>
</reference>
<reference key="4">
    <citation type="journal article" date="2005" name="PLoS Biol.">
        <title>The genomes of Oryza sativa: a history of duplications.</title>
        <authorList>
            <person name="Yu J."/>
            <person name="Wang J."/>
            <person name="Lin W."/>
            <person name="Li S."/>
            <person name="Li H."/>
            <person name="Zhou J."/>
            <person name="Ni P."/>
            <person name="Dong W."/>
            <person name="Hu S."/>
            <person name="Zeng C."/>
            <person name="Zhang J."/>
            <person name="Zhang Y."/>
            <person name="Li R."/>
            <person name="Xu Z."/>
            <person name="Li S."/>
            <person name="Li X."/>
            <person name="Zheng H."/>
            <person name="Cong L."/>
            <person name="Lin L."/>
            <person name="Yin J."/>
            <person name="Geng J."/>
            <person name="Li G."/>
            <person name="Shi J."/>
            <person name="Liu J."/>
            <person name="Lv H."/>
            <person name="Li J."/>
            <person name="Wang J."/>
            <person name="Deng Y."/>
            <person name="Ran L."/>
            <person name="Shi X."/>
            <person name="Wang X."/>
            <person name="Wu Q."/>
            <person name="Li C."/>
            <person name="Ren X."/>
            <person name="Wang J."/>
            <person name="Wang X."/>
            <person name="Li D."/>
            <person name="Liu D."/>
            <person name="Zhang X."/>
            <person name="Ji Z."/>
            <person name="Zhao W."/>
            <person name="Sun Y."/>
            <person name="Zhang Z."/>
            <person name="Bao J."/>
            <person name="Han Y."/>
            <person name="Dong L."/>
            <person name="Ji J."/>
            <person name="Chen P."/>
            <person name="Wu S."/>
            <person name="Liu J."/>
            <person name="Xiao Y."/>
            <person name="Bu D."/>
            <person name="Tan J."/>
            <person name="Yang L."/>
            <person name="Ye C."/>
            <person name="Zhang J."/>
            <person name="Xu J."/>
            <person name="Zhou Y."/>
            <person name="Yu Y."/>
            <person name="Zhang B."/>
            <person name="Zhuang S."/>
            <person name="Wei H."/>
            <person name="Liu B."/>
            <person name="Lei M."/>
            <person name="Yu H."/>
            <person name="Li Y."/>
            <person name="Xu H."/>
            <person name="Wei S."/>
            <person name="He X."/>
            <person name="Fang L."/>
            <person name="Zhang Z."/>
            <person name="Zhang Y."/>
            <person name="Huang X."/>
            <person name="Su Z."/>
            <person name="Tong W."/>
            <person name="Li J."/>
            <person name="Tong Z."/>
            <person name="Li S."/>
            <person name="Ye J."/>
            <person name="Wang L."/>
            <person name="Fang L."/>
            <person name="Lei T."/>
            <person name="Chen C.-S."/>
            <person name="Chen H.-C."/>
            <person name="Xu Z."/>
            <person name="Li H."/>
            <person name="Huang H."/>
            <person name="Zhang F."/>
            <person name="Xu H."/>
            <person name="Li N."/>
            <person name="Zhao C."/>
            <person name="Li S."/>
            <person name="Dong L."/>
            <person name="Huang Y."/>
            <person name="Li L."/>
            <person name="Xi Y."/>
            <person name="Qi Q."/>
            <person name="Li W."/>
            <person name="Zhang B."/>
            <person name="Hu W."/>
            <person name="Zhang Y."/>
            <person name="Tian X."/>
            <person name="Jiao Y."/>
            <person name="Liang X."/>
            <person name="Jin J."/>
            <person name="Gao L."/>
            <person name="Zheng W."/>
            <person name="Hao B."/>
            <person name="Liu S.-M."/>
            <person name="Wang W."/>
            <person name="Yuan L."/>
            <person name="Cao M."/>
            <person name="McDermott J."/>
            <person name="Samudrala R."/>
            <person name="Wang J."/>
            <person name="Wong G.K.-S."/>
            <person name="Yang H."/>
        </authorList>
    </citation>
    <scope>NUCLEOTIDE SEQUENCE [LARGE SCALE GENOMIC DNA]</scope>
    <source>
        <strain>cv. Nipponbare</strain>
    </source>
</reference>
<reference key="5">
    <citation type="journal article" date="2003" name="Science">
        <title>Collection, mapping, and annotation of over 28,000 cDNA clones from japonica rice.</title>
        <authorList>
            <consortium name="The rice full-length cDNA consortium"/>
        </authorList>
    </citation>
    <scope>NUCLEOTIDE SEQUENCE [LARGE SCALE MRNA]</scope>
    <source>
        <strain>cv. Nipponbare</strain>
    </source>
</reference>
<reference key="6">
    <citation type="journal article" date="2007" name="Planta">
        <title>Genes for alkaline/neutral invertase in rice: alkaline/neutral invertases are located in plant mitochondria and also in plastids.</title>
        <authorList>
            <person name="Murayama S."/>
            <person name="Handa H."/>
        </authorList>
    </citation>
    <scope>SUBCELLULAR LOCATION</scope>
</reference>
<feature type="transit peptide" description="Chloroplast" evidence="2">
    <location>
        <begin position="1"/>
        <end position="58"/>
    </location>
</feature>
<feature type="chain" id="PRO_0000431506" description="Neutral/alkaline invertase 3, chloroplastic" evidence="2">
    <location>
        <begin position="59"/>
        <end position="606"/>
    </location>
</feature>
<feature type="region of interest" description="Disordered" evidence="3">
    <location>
        <begin position="97"/>
        <end position="126"/>
    </location>
</feature>
<name>NIN3_ORYSJ</name>